<sequence>MRRFLLLYATQQGQAKAIAEEICEQAVVHGFSADLHCISESDKYDLKTETAPLVVVVSTTGTGDPPDTARKFVKEIQNQTLPVDFFAHLRYGLLGLGDSEYTYFCNGGKIIDKRLQELGARHFYDTGHADDCVGLELVVEPWIAGLWPALRKHFRSSRGQEEISGALPVASPASSRTDLVKSELLHIESQVELLRFDDSGRKDSEVLKQNAVNSNQSNVVIEDFESSLTRSVPPLSQASLNIPGLPPEYLQVHLQESLGQEESQVSVTSADPVFQVPISKAVQLTTNDAIKTTLLVELDISNTDFSYQPGDAFSVICPNSDSEVQSLLQRLQLEDKREHCVLLKIKADTKKKGATLPQHIPAGCSLQFIFTWCLEIRAIPKKAFLRALVDYTSDSAEKRRLQELCSKQGAADYSRFVRDACACLLDLLLAFPSCQPPLSLLLEHLPKLQPRPYSCASSSLFHPGKLHFVFNIVEFLSTATTEVLRKGVCTGWLALLVASVLQPNIHASHEDSGKALAPKISISPRTTNSFHLPDDPSIPIIMVGPGTGIAPFIGFLQHREKLQEQHPDGNFGAMWLFFGCRHKDRDYLFRKELRHFLKHGILTHLKVSFSRDAPVGEEEAPAKYVQDNIQLHGQQVARILLQENGHIYVCGDAKNMAKDVHDALVQIISKEVGVEKLEAMKTLATLKEEKRYLQDIWS</sequence>
<keyword id="KW-0002">3D-structure</keyword>
<keyword id="KW-0025">Alternative splicing</keyword>
<keyword id="KW-0028">Amino-acid biosynthesis</keyword>
<keyword id="KW-0963">Cytoplasm</keyword>
<keyword id="KW-0225">Disease variant</keyword>
<keyword id="KW-0274">FAD</keyword>
<keyword id="KW-0285">Flavoprotein</keyword>
<keyword id="KW-0288">FMN</keyword>
<keyword id="KW-0486">Methionine biosynthesis</keyword>
<keyword id="KW-0521">NADP</keyword>
<keyword id="KW-0560">Oxidoreductase</keyword>
<keyword id="KW-0597">Phosphoprotein</keyword>
<keyword id="KW-1267">Proteomics identification</keyword>
<keyword id="KW-1185">Reference proteome</keyword>
<keyword id="KW-0949">S-adenosyl-L-methionine</keyword>
<dbReference type="EC" id="1.16.1.8" evidence="10"/>
<dbReference type="EMBL" id="AF121213">
    <property type="protein sequence ID" value="AAF17303.1"/>
    <property type="molecule type" value="Genomic_DNA"/>
</dbReference>
<dbReference type="EMBL" id="AF121202">
    <property type="protein sequence ID" value="AAF17303.1"/>
    <property type="status" value="JOINED"/>
    <property type="molecule type" value="Genomic_DNA"/>
</dbReference>
<dbReference type="EMBL" id="AF121203">
    <property type="protein sequence ID" value="AAF17303.1"/>
    <property type="status" value="JOINED"/>
    <property type="molecule type" value="Genomic_DNA"/>
</dbReference>
<dbReference type="EMBL" id="AF121204">
    <property type="protein sequence ID" value="AAF17303.1"/>
    <property type="status" value="JOINED"/>
    <property type="molecule type" value="Genomic_DNA"/>
</dbReference>
<dbReference type="EMBL" id="AF121205">
    <property type="protein sequence ID" value="AAF17303.1"/>
    <property type="status" value="JOINED"/>
    <property type="molecule type" value="Genomic_DNA"/>
</dbReference>
<dbReference type="EMBL" id="AF121206">
    <property type="protein sequence ID" value="AAF17303.1"/>
    <property type="status" value="JOINED"/>
    <property type="molecule type" value="Genomic_DNA"/>
</dbReference>
<dbReference type="EMBL" id="AF121207">
    <property type="protein sequence ID" value="AAF17303.1"/>
    <property type="status" value="JOINED"/>
    <property type="molecule type" value="Genomic_DNA"/>
</dbReference>
<dbReference type="EMBL" id="AF121208">
    <property type="protein sequence ID" value="AAF17303.1"/>
    <property type="status" value="JOINED"/>
    <property type="molecule type" value="Genomic_DNA"/>
</dbReference>
<dbReference type="EMBL" id="AF121209">
    <property type="protein sequence ID" value="AAF17303.1"/>
    <property type="status" value="JOINED"/>
    <property type="molecule type" value="Genomic_DNA"/>
</dbReference>
<dbReference type="EMBL" id="AF121210">
    <property type="protein sequence ID" value="AAF17303.1"/>
    <property type="status" value="JOINED"/>
    <property type="molecule type" value="Genomic_DNA"/>
</dbReference>
<dbReference type="EMBL" id="AF121211">
    <property type="protein sequence ID" value="AAF17303.1"/>
    <property type="status" value="JOINED"/>
    <property type="molecule type" value="Genomic_DNA"/>
</dbReference>
<dbReference type="EMBL" id="AF121212">
    <property type="protein sequence ID" value="AAF17303.1"/>
    <property type="status" value="JOINED"/>
    <property type="molecule type" value="Genomic_DNA"/>
</dbReference>
<dbReference type="EMBL" id="AF121214">
    <property type="protein sequence ID" value="AAF16876.1"/>
    <property type="molecule type" value="mRNA"/>
</dbReference>
<dbReference type="EMBL" id="AF121213">
    <property type="protein sequence ID" value="AAF17304.1"/>
    <property type="molecule type" value="Genomic_DNA"/>
</dbReference>
<dbReference type="EMBL" id="AF121202">
    <property type="protein sequence ID" value="AAF17304.1"/>
    <property type="status" value="JOINED"/>
    <property type="molecule type" value="Genomic_DNA"/>
</dbReference>
<dbReference type="EMBL" id="AF121203">
    <property type="protein sequence ID" value="AAF17304.1"/>
    <property type="status" value="JOINED"/>
    <property type="molecule type" value="Genomic_DNA"/>
</dbReference>
<dbReference type="EMBL" id="AF121204">
    <property type="protein sequence ID" value="AAF17304.1"/>
    <property type="status" value="JOINED"/>
    <property type="molecule type" value="Genomic_DNA"/>
</dbReference>
<dbReference type="EMBL" id="AF121205">
    <property type="protein sequence ID" value="AAF17304.1"/>
    <property type="status" value="JOINED"/>
    <property type="molecule type" value="Genomic_DNA"/>
</dbReference>
<dbReference type="EMBL" id="AF121206">
    <property type="protein sequence ID" value="AAF17304.1"/>
    <property type="status" value="JOINED"/>
    <property type="molecule type" value="Genomic_DNA"/>
</dbReference>
<dbReference type="EMBL" id="AF121207">
    <property type="protein sequence ID" value="AAF17304.1"/>
    <property type="status" value="JOINED"/>
    <property type="molecule type" value="Genomic_DNA"/>
</dbReference>
<dbReference type="EMBL" id="AF121208">
    <property type="protein sequence ID" value="AAF17304.1"/>
    <property type="status" value="JOINED"/>
    <property type="molecule type" value="Genomic_DNA"/>
</dbReference>
<dbReference type="EMBL" id="AF121209">
    <property type="protein sequence ID" value="AAF17304.1"/>
    <property type="status" value="JOINED"/>
    <property type="molecule type" value="Genomic_DNA"/>
</dbReference>
<dbReference type="EMBL" id="AF121210">
    <property type="protein sequence ID" value="AAF17304.1"/>
    <property type="status" value="JOINED"/>
    <property type="molecule type" value="Genomic_DNA"/>
</dbReference>
<dbReference type="EMBL" id="AF121211">
    <property type="protein sequence ID" value="AAF17304.1"/>
    <property type="status" value="JOINED"/>
    <property type="molecule type" value="Genomic_DNA"/>
</dbReference>
<dbReference type="EMBL" id="AF121212">
    <property type="protein sequence ID" value="AAF17304.1"/>
    <property type="status" value="JOINED"/>
    <property type="molecule type" value="Genomic_DNA"/>
</dbReference>
<dbReference type="EMBL" id="AF025794">
    <property type="protein sequence ID" value="AAC39667.1"/>
    <property type="molecule type" value="mRNA"/>
</dbReference>
<dbReference type="EMBL" id="AC010346">
    <property type="status" value="NOT_ANNOTATED_CDS"/>
    <property type="molecule type" value="Genomic_DNA"/>
</dbReference>
<dbReference type="EMBL" id="AC025174">
    <property type="status" value="NOT_ANNOTATED_CDS"/>
    <property type="molecule type" value="Genomic_DNA"/>
</dbReference>
<dbReference type="EMBL" id="BC054816">
    <property type="protein sequence ID" value="AAH54816.2"/>
    <property type="molecule type" value="mRNA"/>
</dbReference>
<dbReference type="EMBL" id="BC109216">
    <property type="protein sequence ID" value="AAI09217.1"/>
    <property type="molecule type" value="mRNA"/>
</dbReference>
<dbReference type="CCDS" id="CCDS47190.1">
    <molecule id="Q9UBK8-2"/>
</dbReference>
<dbReference type="RefSeq" id="NP_001351369.1">
    <molecule id="Q9UBK8-2"/>
    <property type="nucleotide sequence ID" value="NM_001364440.2"/>
</dbReference>
<dbReference type="RefSeq" id="NP_001351370.1">
    <molecule id="Q9UBK8-2"/>
    <property type="nucleotide sequence ID" value="NM_001364441.2"/>
</dbReference>
<dbReference type="RefSeq" id="NP_001351371.1">
    <molecule id="Q9UBK8-2"/>
    <property type="nucleotide sequence ID" value="NM_001364442.2"/>
</dbReference>
<dbReference type="RefSeq" id="NP_002445.2">
    <molecule id="Q9UBK8-2"/>
    <property type="nucleotide sequence ID" value="NM_002454.3"/>
</dbReference>
<dbReference type="RefSeq" id="NP_076915.3">
    <molecule id="Q9UBK8-2"/>
    <property type="nucleotide sequence ID" value="NM_024010.4"/>
</dbReference>
<dbReference type="RefSeq" id="XP_024301832.1">
    <molecule id="Q9UBK8-2"/>
    <property type="nucleotide sequence ID" value="XM_024446064.2"/>
</dbReference>
<dbReference type="RefSeq" id="XP_047273189.1">
    <molecule id="Q9UBK8-2"/>
    <property type="nucleotide sequence ID" value="XM_047417233.1"/>
</dbReference>
<dbReference type="RefSeq" id="XP_047273190.1">
    <molecule id="Q9UBK8-2"/>
    <property type="nucleotide sequence ID" value="XM_047417234.1"/>
</dbReference>
<dbReference type="RefSeq" id="XP_054208631.1">
    <molecule id="Q9UBK8-2"/>
    <property type="nucleotide sequence ID" value="XM_054352656.1"/>
</dbReference>
<dbReference type="RefSeq" id="XP_054208632.1">
    <molecule id="Q9UBK8-2"/>
    <property type="nucleotide sequence ID" value="XM_054352657.1"/>
</dbReference>
<dbReference type="RefSeq" id="XP_054208633.1">
    <molecule id="Q9UBK8-2"/>
    <property type="nucleotide sequence ID" value="XM_054352658.1"/>
</dbReference>
<dbReference type="PDB" id="2QTL">
    <property type="method" value="X-ray"/>
    <property type="resolution" value="1.90 A"/>
    <property type="chains" value="A=165-698"/>
</dbReference>
<dbReference type="PDB" id="2QTZ">
    <property type="method" value="X-ray"/>
    <property type="resolution" value="1.90 A"/>
    <property type="chains" value="A=165-698"/>
</dbReference>
<dbReference type="PDBsum" id="2QTL"/>
<dbReference type="PDBsum" id="2QTZ"/>
<dbReference type="SMR" id="Q9UBK8"/>
<dbReference type="BioGRID" id="110645">
    <property type="interactions" value="20"/>
</dbReference>
<dbReference type="DIP" id="DIP-61183N"/>
<dbReference type="FunCoup" id="Q9UBK8">
    <property type="interactions" value="2004"/>
</dbReference>
<dbReference type="IntAct" id="Q9UBK8">
    <property type="interactions" value="10"/>
</dbReference>
<dbReference type="STRING" id="9606.ENSP00000402510"/>
<dbReference type="DrugBank" id="DB00115">
    <property type="generic name" value="Cyanocobalamin"/>
</dbReference>
<dbReference type="DrugBank" id="DB00134">
    <property type="generic name" value="Methionine"/>
</dbReference>
<dbReference type="DrugCentral" id="Q9UBK8"/>
<dbReference type="GlyGen" id="Q9UBK8">
    <property type="glycosylation" value="1 site, 1 O-linked glycan (1 site)"/>
</dbReference>
<dbReference type="iPTMnet" id="Q9UBK8"/>
<dbReference type="PhosphoSitePlus" id="Q9UBK8"/>
<dbReference type="SwissPalm" id="Q9UBK8"/>
<dbReference type="BioMuta" id="MTRR"/>
<dbReference type="DMDM" id="296439300"/>
<dbReference type="jPOST" id="Q9UBK8"/>
<dbReference type="MassIVE" id="Q9UBK8"/>
<dbReference type="PaxDb" id="9606-ENSP00000264668"/>
<dbReference type="PeptideAtlas" id="Q9UBK8"/>
<dbReference type="ProteomicsDB" id="83984">
    <molecule id="Q9UBK8-1"/>
</dbReference>
<dbReference type="ProteomicsDB" id="83985">
    <molecule id="Q9UBK8-2"/>
</dbReference>
<dbReference type="Pumba" id="Q9UBK8"/>
<dbReference type="Antibodypedia" id="22429">
    <property type="antibodies" value="86 antibodies from 20 providers"/>
</dbReference>
<dbReference type="DNASU" id="4552"/>
<dbReference type="Ensembl" id="ENST00000264668.6">
    <molecule id="Q9UBK8-1"/>
    <property type="protein sequence ID" value="ENSP00000264668.2"/>
    <property type="gene ID" value="ENSG00000124275.15"/>
</dbReference>
<dbReference type="Ensembl" id="ENST00000440940.7">
    <molecule id="Q9UBK8-2"/>
    <property type="protein sequence ID" value="ENSP00000402510.2"/>
    <property type="gene ID" value="ENSG00000124275.15"/>
</dbReference>
<dbReference type="GeneID" id="4552"/>
<dbReference type="KEGG" id="hsa:4552"/>
<dbReference type="MANE-Select" id="ENST00000440940.7">
    <property type="protein sequence ID" value="ENSP00000402510.2"/>
    <property type="RefSeq nucleotide sequence ID" value="NM_002454.3"/>
    <property type="RefSeq protein sequence ID" value="NP_002445.2"/>
</dbReference>
<dbReference type="UCSC" id="uc003jed.4">
    <molecule id="Q9UBK8-2"/>
    <property type="organism name" value="human"/>
</dbReference>
<dbReference type="AGR" id="HGNC:7473"/>
<dbReference type="CTD" id="4552"/>
<dbReference type="DisGeNET" id="4552"/>
<dbReference type="GeneCards" id="MTRR"/>
<dbReference type="GeneReviews" id="MTRR"/>
<dbReference type="HGNC" id="HGNC:7473">
    <property type="gene designation" value="MTRR"/>
</dbReference>
<dbReference type="HPA" id="ENSG00000124275">
    <property type="expression patterns" value="Low tissue specificity"/>
</dbReference>
<dbReference type="MalaCards" id="MTRR"/>
<dbReference type="MIM" id="236270">
    <property type="type" value="phenotype"/>
</dbReference>
<dbReference type="MIM" id="601634">
    <property type="type" value="phenotype"/>
</dbReference>
<dbReference type="MIM" id="602568">
    <property type="type" value="gene"/>
</dbReference>
<dbReference type="neXtProt" id="NX_Q9UBK8"/>
<dbReference type="OpenTargets" id="ENSG00000124275"/>
<dbReference type="Orphanet" id="2169">
    <property type="disease" value="Methylcobalamin deficiency type cblE"/>
</dbReference>
<dbReference type="PharmGKB" id="PA31277"/>
<dbReference type="VEuPathDB" id="HostDB:ENSG00000124275"/>
<dbReference type="eggNOG" id="KOG1158">
    <property type="taxonomic scope" value="Eukaryota"/>
</dbReference>
<dbReference type="GeneTree" id="ENSGT00940000155822"/>
<dbReference type="HOGENOM" id="CLU_001570_17_7_1"/>
<dbReference type="InParanoid" id="Q9UBK8"/>
<dbReference type="OMA" id="LFFGHQR"/>
<dbReference type="OrthoDB" id="1856718at2759"/>
<dbReference type="PAN-GO" id="Q9UBK8">
    <property type="GO annotations" value="6 GO annotations based on evolutionary models"/>
</dbReference>
<dbReference type="PhylomeDB" id="Q9UBK8"/>
<dbReference type="TreeFam" id="TF105716"/>
<dbReference type="BioCyc" id="MetaCyc:HS04756-MONOMER"/>
<dbReference type="BRENDA" id="1.16.1.8">
    <property type="organism ID" value="2681"/>
</dbReference>
<dbReference type="PathwayCommons" id="Q9UBK8"/>
<dbReference type="Reactome" id="R-HSA-156581">
    <property type="pathway name" value="Methylation"/>
</dbReference>
<dbReference type="Reactome" id="R-HSA-1614635">
    <property type="pathway name" value="Sulfur amino acid metabolism"/>
</dbReference>
<dbReference type="Reactome" id="R-HSA-3359467">
    <property type="pathway name" value="Defective MTRR causes HMAE"/>
</dbReference>
<dbReference type="Reactome" id="R-HSA-3359469">
    <property type="pathway name" value="Defective MTR causes HMAG"/>
</dbReference>
<dbReference type="Reactome" id="R-HSA-9759218">
    <property type="pathway name" value="Cobalamin (Cbl) metabolism"/>
</dbReference>
<dbReference type="SABIO-RK" id="Q9UBK8"/>
<dbReference type="SignaLink" id="Q9UBK8"/>
<dbReference type="BioGRID-ORCS" id="4552">
    <property type="hits" value="42 hits in 1172 CRISPR screens"/>
</dbReference>
<dbReference type="ChiTaRS" id="MTRR">
    <property type="organism name" value="human"/>
</dbReference>
<dbReference type="EvolutionaryTrace" id="Q9UBK8"/>
<dbReference type="GeneWiki" id="MTRR_(gene)"/>
<dbReference type="GenomeRNAi" id="4552"/>
<dbReference type="Pharos" id="Q9UBK8">
    <property type="development level" value="Tbio"/>
</dbReference>
<dbReference type="PRO" id="PR:Q9UBK8"/>
<dbReference type="Proteomes" id="UP000005640">
    <property type="component" value="Chromosome 5"/>
</dbReference>
<dbReference type="RNAct" id="Q9UBK8">
    <property type="molecule type" value="protein"/>
</dbReference>
<dbReference type="Bgee" id="ENSG00000124275">
    <property type="expression patterns" value="Expressed in endothelial cell and 199 other cell types or tissues"/>
</dbReference>
<dbReference type="ExpressionAtlas" id="Q9UBK8">
    <property type="expression patterns" value="baseline and differential"/>
</dbReference>
<dbReference type="GO" id="GO:0005829">
    <property type="term" value="C:cytosol"/>
    <property type="evidence" value="ECO:0000314"/>
    <property type="project" value="HPA"/>
</dbReference>
<dbReference type="GO" id="GO:0045111">
    <property type="term" value="C:intermediate filament cytoskeleton"/>
    <property type="evidence" value="ECO:0000314"/>
    <property type="project" value="HPA"/>
</dbReference>
<dbReference type="GO" id="GO:0005654">
    <property type="term" value="C:nucleoplasm"/>
    <property type="evidence" value="ECO:0000314"/>
    <property type="project" value="HPA"/>
</dbReference>
<dbReference type="GO" id="GO:0030586">
    <property type="term" value="F:[methionine synthase] reductase (NADPH) activity"/>
    <property type="evidence" value="ECO:0000314"/>
    <property type="project" value="BHF-UCL"/>
</dbReference>
<dbReference type="GO" id="GO:0071949">
    <property type="term" value="F:FAD binding"/>
    <property type="evidence" value="ECO:0000314"/>
    <property type="project" value="BHF-UCL"/>
</dbReference>
<dbReference type="GO" id="GO:0050660">
    <property type="term" value="F:flavin adenine dinucleotide binding"/>
    <property type="evidence" value="ECO:0000314"/>
    <property type="project" value="UniProtKB"/>
</dbReference>
<dbReference type="GO" id="GO:0010181">
    <property type="term" value="F:FMN binding"/>
    <property type="evidence" value="ECO:0000314"/>
    <property type="project" value="BHF-UCL"/>
</dbReference>
<dbReference type="GO" id="GO:0140104">
    <property type="term" value="F:molecular carrier activity"/>
    <property type="evidence" value="ECO:0000269"/>
    <property type="project" value="Reactome"/>
</dbReference>
<dbReference type="GO" id="GO:0070402">
    <property type="term" value="F:NADPH binding"/>
    <property type="evidence" value="ECO:0000314"/>
    <property type="project" value="BHF-UCL"/>
</dbReference>
<dbReference type="GO" id="GO:0003958">
    <property type="term" value="F:NADPH-hemoprotein reductase activity"/>
    <property type="evidence" value="ECO:0000314"/>
    <property type="project" value="BHF-UCL"/>
</dbReference>
<dbReference type="GO" id="GO:0016723">
    <property type="term" value="F:oxidoreductase activity, acting on metal ions, NAD or NADP as acceptor"/>
    <property type="evidence" value="ECO:0000314"/>
    <property type="project" value="UniProtKB"/>
</dbReference>
<dbReference type="GO" id="GO:0009235">
    <property type="term" value="P:cobalamin metabolic process"/>
    <property type="evidence" value="ECO:0000304"/>
    <property type="project" value="Reactome"/>
</dbReference>
<dbReference type="GO" id="GO:0046655">
    <property type="term" value="P:folic acid metabolic process"/>
    <property type="evidence" value="ECO:0000314"/>
    <property type="project" value="BHF-UCL"/>
</dbReference>
<dbReference type="GO" id="GO:0043418">
    <property type="term" value="P:homocysteine catabolic process"/>
    <property type="evidence" value="ECO:0000314"/>
    <property type="project" value="BHF-UCL"/>
</dbReference>
<dbReference type="GO" id="GO:0050667">
    <property type="term" value="P:homocysteine metabolic process"/>
    <property type="evidence" value="ECO:0000318"/>
    <property type="project" value="GO_Central"/>
</dbReference>
<dbReference type="GO" id="GO:0009086">
    <property type="term" value="P:methionine biosynthetic process"/>
    <property type="evidence" value="ECO:0000314"/>
    <property type="project" value="BHF-UCL"/>
</dbReference>
<dbReference type="GO" id="GO:0033353">
    <property type="term" value="P:S-adenosylmethionine cycle"/>
    <property type="evidence" value="ECO:0000250"/>
    <property type="project" value="BHF-UCL"/>
</dbReference>
<dbReference type="CDD" id="cd06203">
    <property type="entry name" value="methionine_synthase_red"/>
    <property type="match status" value="1"/>
</dbReference>
<dbReference type="FunFam" id="1.20.990.10:FF:000007">
    <property type="entry name" value="Methionine synthase reductase"/>
    <property type="match status" value="1"/>
</dbReference>
<dbReference type="FunFam" id="3.40.50.360:FF:000025">
    <property type="entry name" value="methionine synthase reductase"/>
    <property type="match status" value="1"/>
</dbReference>
<dbReference type="FunFam" id="3.40.50.80:FF:000018">
    <property type="entry name" value="NADPH--cytochrome P450 reductase"/>
    <property type="match status" value="1"/>
</dbReference>
<dbReference type="Gene3D" id="3.40.50.360">
    <property type="match status" value="1"/>
</dbReference>
<dbReference type="Gene3D" id="1.20.990.10">
    <property type="entry name" value="NADPH-cytochrome p450 Reductase, Chain A, domain 3"/>
    <property type="match status" value="1"/>
</dbReference>
<dbReference type="Gene3D" id="3.40.50.80">
    <property type="entry name" value="Nucleotide-binding domain of ferredoxin-NADP reductase (FNR) module"/>
    <property type="match status" value="1"/>
</dbReference>
<dbReference type="Gene3D" id="2.40.30.10">
    <property type="entry name" value="Translation factors"/>
    <property type="match status" value="1"/>
</dbReference>
<dbReference type="InterPro" id="IPR003097">
    <property type="entry name" value="CysJ-like_FAD-binding"/>
</dbReference>
<dbReference type="InterPro" id="IPR017927">
    <property type="entry name" value="FAD-bd_FR_type"/>
</dbReference>
<dbReference type="InterPro" id="IPR001094">
    <property type="entry name" value="Flavdoxin-like"/>
</dbReference>
<dbReference type="InterPro" id="IPR008254">
    <property type="entry name" value="Flavodoxin/NO_synth"/>
</dbReference>
<dbReference type="InterPro" id="IPR001709">
    <property type="entry name" value="Flavoprot_Pyr_Nucl_cyt_Rdtase"/>
</dbReference>
<dbReference type="InterPro" id="IPR029039">
    <property type="entry name" value="Flavoprotein-like_sf"/>
</dbReference>
<dbReference type="InterPro" id="IPR039261">
    <property type="entry name" value="FNR_nucleotide-bd"/>
</dbReference>
<dbReference type="InterPro" id="IPR023173">
    <property type="entry name" value="NADPH_Cyt_P450_Rdtase_alpha"/>
</dbReference>
<dbReference type="InterPro" id="IPR001433">
    <property type="entry name" value="OxRdtase_FAD/NAD-bd"/>
</dbReference>
<dbReference type="InterPro" id="IPR017938">
    <property type="entry name" value="Riboflavin_synthase-like_b-brl"/>
</dbReference>
<dbReference type="PANTHER" id="PTHR19384:SF84">
    <property type="entry name" value="METHIONINE SYNTHASE REDUCTASE"/>
    <property type="match status" value="1"/>
</dbReference>
<dbReference type="PANTHER" id="PTHR19384">
    <property type="entry name" value="NITRIC OXIDE SYNTHASE-RELATED"/>
    <property type="match status" value="1"/>
</dbReference>
<dbReference type="Pfam" id="PF00667">
    <property type="entry name" value="FAD_binding_1"/>
    <property type="match status" value="1"/>
</dbReference>
<dbReference type="Pfam" id="PF00258">
    <property type="entry name" value="Flavodoxin_1"/>
    <property type="match status" value="1"/>
</dbReference>
<dbReference type="Pfam" id="PF00175">
    <property type="entry name" value="NAD_binding_1"/>
    <property type="match status" value="1"/>
</dbReference>
<dbReference type="PRINTS" id="PR00369">
    <property type="entry name" value="FLAVODOXIN"/>
</dbReference>
<dbReference type="PRINTS" id="PR00371">
    <property type="entry name" value="FPNCR"/>
</dbReference>
<dbReference type="SUPFAM" id="SSF52343">
    <property type="entry name" value="Ferredoxin reductase-like, C-terminal NADP-linked domain"/>
    <property type="match status" value="1"/>
</dbReference>
<dbReference type="SUPFAM" id="SSF52218">
    <property type="entry name" value="Flavoproteins"/>
    <property type="match status" value="1"/>
</dbReference>
<dbReference type="SUPFAM" id="SSF63380">
    <property type="entry name" value="Riboflavin synthase domain-like"/>
    <property type="match status" value="1"/>
</dbReference>
<dbReference type="PROSITE" id="PS51384">
    <property type="entry name" value="FAD_FR"/>
    <property type="match status" value="1"/>
</dbReference>
<dbReference type="PROSITE" id="PS50902">
    <property type="entry name" value="FLAVODOXIN_LIKE"/>
    <property type="match status" value="1"/>
</dbReference>
<name>MTRR_HUMAN</name>
<feature type="chain" id="PRO_0000021785" description="Methionine synthase reductase">
    <location>
        <begin position="1"/>
        <end position="698"/>
    </location>
</feature>
<feature type="domain" description="Flavodoxin-like" evidence="2">
    <location>
        <begin position="5"/>
        <end position="147"/>
    </location>
</feature>
<feature type="domain" description="FAD-binding FR-type" evidence="3">
    <location>
        <begin position="271"/>
        <end position="533"/>
    </location>
</feature>
<feature type="region of interest" description="Hinge">
    <location>
        <begin position="166"/>
        <end position="247"/>
    </location>
</feature>
<feature type="binding site" evidence="2">
    <location>
        <begin position="93"/>
        <end position="124"/>
    </location>
    <ligand>
        <name>FMN</name>
        <dbReference type="ChEBI" id="CHEBI:58210"/>
    </ligand>
</feature>
<feature type="binding site" evidence="10">
    <location>
        <position position="291"/>
    </location>
    <ligand>
        <name>NADP(+)</name>
        <dbReference type="ChEBI" id="CHEBI:58349"/>
    </ligand>
</feature>
<feature type="binding site" evidence="10">
    <location>
        <begin position="451"/>
        <end position="454"/>
    </location>
    <ligand>
        <name>FAD</name>
        <dbReference type="ChEBI" id="CHEBI:57692"/>
    </ligand>
</feature>
<feature type="binding site" evidence="10">
    <location>
        <begin position="487"/>
        <end position="490"/>
    </location>
    <ligand>
        <name>FAD</name>
        <dbReference type="ChEBI" id="CHEBI:57692"/>
    </ligand>
</feature>
<feature type="binding site" evidence="10">
    <location>
        <begin position="610"/>
        <end position="611"/>
    </location>
    <ligand>
        <name>NADP(+)</name>
        <dbReference type="ChEBI" id="CHEBI:58349"/>
    </ligand>
</feature>
<feature type="binding site" evidence="10">
    <location>
        <begin position="624"/>
        <end position="626"/>
    </location>
    <ligand>
        <name>NADP(+)</name>
        <dbReference type="ChEBI" id="CHEBI:58349"/>
    </ligand>
</feature>
<feature type="binding site" evidence="10">
    <location>
        <position position="659"/>
    </location>
    <ligand>
        <name>NADP(+)</name>
        <dbReference type="ChEBI" id="CHEBI:58349"/>
    </ligand>
</feature>
<feature type="binding site" evidence="10">
    <location>
        <position position="697"/>
    </location>
    <ligand>
        <name>FAD</name>
        <dbReference type="ChEBI" id="CHEBI:57692"/>
    </ligand>
</feature>
<feature type="modified residue" description="Phosphoserine" evidence="23 24">
    <location>
        <position position="171"/>
    </location>
</feature>
<feature type="modified residue" description="Phosphoserine" evidence="24 25">
    <location>
        <position position="189"/>
    </location>
</feature>
<feature type="splice variant" id="VSP_060027" description="In isoform A." evidence="14 15 17">
    <original>M</original>
    <variation>MGAASVRAGARLVEVALCSFTVTCLEVM</variation>
    <location>
        <position position="1"/>
    </location>
</feature>
<feature type="sequence variant" id="VAR_012836" description="May increase risk for spina bifida; dbSNP:rs1801394." evidence="4 7 8">
    <original>I</original>
    <variation>M</variation>
    <location>
        <position position="22"/>
    </location>
</feature>
<feature type="sequence variant" id="VAR_012837" description="In HMAE." evidence="5">
    <location>
        <position position="54"/>
    </location>
</feature>
<feature type="sequence variant" id="VAR_012838" description="In HMAE; dbSNP:rs761061866." evidence="5">
    <original>V</original>
    <variation>M</variation>
    <location>
        <position position="56"/>
    </location>
</feature>
<feature type="sequence variant" id="VAR_012839" description="In HMAE." evidence="5">
    <original>A</original>
    <variation>T</variation>
    <location>
        <position position="129"/>
    </location>
</feature>
<feature type="sequence variant" id="VAR_034595" description="In dbSNP:rs1532268." evidence="6 8 13 24">
    <original>S</original>
    <variation>L</variation>
    <location>
        <position position="175"/>
    </location>
</feature>
<feature type="sequence variant" id="VAR_034596" description="In dbSNP:rs2303080.">
    <original>S</original>
    <variation>T</variation>
    <location>
        <position position="257"/>
    </location>
</feature>
<feature type="sequence variant" id="VAR_012840" description="In dbSNP:rs10064631." evidence="5">
    <original>L</original>
    <variation>V</variation>
    <location>
        <position position="333"/>
    </location>
</feature>
<feature type="sequence variant" id="VAR_034597" description="In dbSNP:rs162036." evidence="8">
    <original>K</original>
    <variation>R</variation>
    <location>
        <position position="350"/>
    </location>
</feature>
<feature type="sequence variant" id="VAR_012841" description="In HMAE." evidence="5">
    <original>C</original>
    <variation>R</variation>
    <location>
        <position position="405"/>
    </location>
</feature>
<feature type="sequence variant" id="VAR_034598" description="In dbSNP:rs2287780.">
    <original>R</original>
    <variation>C</variation>
    <location>
        <position position="415"/>
    </location>
</feature>
<feature type="sequence variant" id="VAR_034599" description="In dbSNP:rs16879334.">
    <original>P</original>
    <variation>R</variation>
    <location>
        <position position="450"/>
    </location>
</feature>
<feature type="sequence variant" id="VAR_012842" description="In HMAE; dbSNP:rs137853061." evidence="5">
    <original>G</original>
    <variation>R</variation>
    <location>
        <position position="487"/>
    </location>
</feature>
<feature type="sequence variant" id="VAR_056947" description="In dbSNP:rs16879355.">
    <original>A</original>
    <variation>V</variation>
    <location>
        <position position="515"/>
    </location>
</feature>
<feature type="sequence variant" id="VAR_015731" description="In HMAE; dbSNP:rs1939942633." evidence="5">
    <original>G</original>
    <variation>R</variation>
    <location>
        <position position="554"/>
    </location>
</feature>
<feature type="sequence variant" id="VAR_012843" description="In HMAE." evidence="13">
    <location>
        <position position="576"/>
    </location>
</feature>
<feature type="sequence variant" id="VAR_014944" description="In dbSNP:rs10380.">
    <original>H</original>
    <variation>Y</variation>
    <location>
        <position position="595"/>
    </location>
</feature>
<feature type="helix" evidence="26">
    <location>
        <begin position="235"/>
        <end position="237"/>
    </location>
</feature>
<feature type="strand" evidence="26">
    <location>
        <begin position="250"/>
        <end position="255"/>
    </location>
</feature>
<feature type="strand" evidence="26">
    <location>
        <begin position="274"/>
        <end position="283"/>
    </location>
</feature>
<feature type="strand" evidence="26">
    <location>
        <begin position="293"/>
        <end position="299"/>
    </location>
</feature>
<feature type="strand" evidence="26">
    <location>
        <begin position="312"/>
        <end position="316"/>
    </location>
</feature>
<feature type="helix" evidence="26">
    <location>
        <begin position="321"/>
        <end position="330"/>
    </location>
</feature>
<feature type="helix" evidence="26">
    <location>
        <begin position="334"/>
        <end position="336"/>
    </location>
</feature>
<feature type="strand" evidence="26">
    <location>
        <begin position="339"/>
        <end position="345"/>
    </location>
</feature>
<feature type="helix" evidence="26">
    <location>
        <begin position="366"/>
        <end position="372"/>
    </location>
</feature>
<feature type="helix" evidence="26">
    <location>
        <begin position="382"/>
        <end position="389"/>
    </location>
</feature>
<feature type="helix" evidence="26">
    <location>
        <begin position="395"/>
        <end position="405"/>
    </location>
</feature>
<feature type="helix" evidence="26">
    <location>
        <begin position="410"/>
        <end position="416"/>
    </location>
</feature>
<feature type="turn" evidence="26">
    <location>
        <begin position="417"/>
        <end position="421"/>
    </location>
</feature>
<feature type="helix" evidence="26">
    <location>
        <begin position="424"/>
        <end position="430"/>
    </location>
</feature>
<feature type="helix" evidence="26">
    <location>
        <begin position="438"/>
        <end position="444"/>
    </location>
</feature>
<feature type="strand" evidence="26">
    <location>
        <begin position="451"/>
        <end position="454"/>
    </location>
</feature>
<feature type="turn" evidence="26">
    <location>
        <begin position="459"/>
        <end position="461"/>
    </location>
</feature>
<feature type="strand" evidence="26">
    <location>
        <begin position="465"/>
        <end position="471"/>
    </location>
</feature>
<feature type="strand" evidence="26">
    <location>
        <begin position="474"/>
        <end position="476"/>
    </location>
</feature>
<feature type="strand" evidence="26">
    <location>
        <begin position="483"/>
        <end position="486"/>
    </location>
</feature>
<feature type="helix" evidence="26">
    <location>
        <begin position="488"/>
        <end position="496"/>
    </location>
</feature>
<feature type="turn" evidence="26">
    <location>
        <begin position="497"/>
        <end position="500"/>
    </location>
</feature>
<feature type="strand" evidence="26">
    <location>
        <begin position="519"/>
        <end position="524"/>
    </location>
</feature>
<feature type="strand" evidence="26">
    <location>
        <begin position="540"/>
        <end position="543"/>
    </location>
</feature>
<feature type="helix" evidence="26">
    <location>
        <begin position="546"/>
        <end position="549"/>
    </location>
</feature>
<feature type="helix" evidence="26">
    <location>
        <begin position="550"/>
        <end position="565"/>
    </location>
</feature>
<feature type="strand" evidence="26">
    <location>
        <begin position="574"/>
        <end position="581"/>
    </location>
</feature>
<feature type="turn" evidence="26">
    <location>
        <begin position="583"/>
        <end position="585"/>
    </location>
</feature>
<feature type="helix" evidence="26">
    <location>
        <begin position="590"/>
        <end position="598"/>
    </location>
</feature>
<feature type="strand" evidence="26">
    <location>
        <begin position="604"/>
        <end position="612"/>
    </location>
</feature>
<feature type="helix" evidence="26">
    <location>
        <begin position="625"/>
        <end position="631"/>
    </location>
</feature>
<feature type="helix" evidence="26">
    <location>
        <begin position="633"/>
        <end position="642"/>
    </location>
</feature>
<feature type="strand" evidence="26">
    <location>
        <begin position="646"/>
        <end position="652"/>
    </location>
</feature>
<feature type="helix" evidence="26">
    <location>
        <begin position="654"/>
        <end position="672"/>
    </location>
</feature>
<feature type="helix" evidence="26">
    <location>
        <begin position="676"/>
        <end position="688"/>
    </location>
</feature>
<feature type="strand" evidence="26">
    <location>
        <begin position="691"/>
        <end position="696"/>
    </location>
</feature>
<reference key="1">
    <citation type="journal article" date="1999" name="Gene">
        <title>Molecular cloning, expression and physical mapping of the human methionine synthase reductase gene.</title>
        <authorList>
            <person name="Leclerc D."/>
            <person name="Odievre M.-H."/>
            <person name="Wu Q."/>
            <person name="Wilson A."/>
            <person name="Huizenga J."/>
            <person name="Rozen R."/>
            <person name="Scherer S.W."/>
            <person name="Gravel R.A."/>
        </authorList>
    </citation>
    <scope>NUCLEOTIDE SEQUENCE [GENOMIC DNA / MRNA] (ISOFORMS A AND B)</scope>
    <scope>VARIANT LEU-175</scope>
</reference>
<reference key="2">
    <citation type="journal article" date="1998" name="Proc. Natl. Acad. Sci. U.S.A.">
        <title>Cloning and mapping of a cDNA for methionine synthase reductase, a flavoprotein defective in patients with homocystinuria.</title>
        <authorList>
            <person name="Leclerc D."/>
            <person name="Wilson A."/>
            <person name="Dumas R."/>
            <person name="Gafuik C."/>
            <person name="Song D."/>
            <person name="Watkins D."/>
            <person name="Heng H.H.Q."/>
            <person name="Rommens J.M."/>
            <person name="Scherer S.W."/>
            <person name="Rosenblatt D.S."/>
            <person name="Gravel R.A."/>
        </authorList>
    </citation>
    <scope>NUCLEOTIDE SEQUENCE [MRNA] (ISOFORM B)</scope>
    <scope>VARIANT LEU-175</scope>
    <scope>VARIANT HMAE LEU-576 DEL</scope>
</reference>
<reference key="3">
    <citation type="journal article" date="2004" name="Nature">
        <title>The DNA sequence and comparative analysis of human chromosome 5.</title>
        <authorList>
            <person name="Schmutz J."/>
            <person name="Martin J."/>
            <person name="Terry A."/>
            <person name="Couronne O."/>
            <person name="Grimwood J."/>
            <person name="Lowry S."/>
            <person name="Gordon L.A."/>
            <person name="Scott D."/>
            <person name="Xie G."/>
            <person name="Huang W."/>
            <person name="Hellsten U."/>
            <person name="Tran-Gyamfi M."/>
            <person name="She X."/>
            <person name="Prabhakar S."/>
            <person name="Aerts A."/>
            <person name="Altherr M."/>
            <person name="Bajorek E."/>
            <person name="Black S."/>
            <person name="Branscomb E."/>
            <person name="Caoile C."/>
            <person name="Challacombe J.F."/>
            <person name="Chan Y.M."/>
            <person name="Denys M."/>
            <person name="Detter J.C."/>
            <person name="Escobar J."/>
            <person name="Flowers D."/>
            <person name="Fotopulos D."/>
            <person name="Glavina T."/>
            <person name="Gomez M."/>
            <person name="Gonzales E."/>
            <person name="Goodstein D."/>
            <person name="Grigoriev I."/>
            <person name="Groza M."/>
            <person name="Hammon N."/>
            <person name="Hawkins T."/>
            <person name="Haydu L."/>
            <person name="Israni S."/>
            <person name="Jett J."/>
            <person name="Kadner K."/>
            <person name="Kimball H."/>
            <person name="Kobayashi A."/>
            <person name="Lopez F."/>
            <person name="Lou Y."/>
            <person name="Martinez D."/>
            <person name="Medina C."/>
            <person name="Morgan J."/>
            <person name="Nandkeshwar R."/>
            <person name="Noonan J.P."/>
            <person name="Pitluck S."/>
            <person name="Pollard M."/>
            <person name="Predki P."/>
            <person name="Priest J."/>
            <person name="Ramirez L."/>
            <person name="Retterer J."/>
            <person name="Rodriguez A."/>
            <person name="Rogers S."/>
            <person name="Salamov A."/>
            <person name="Salazar A."/>
            <person name="Thayer N."/>
            <person name="Tice H."/>
            <person name="Tsai M."/>
            <person name="Ustaszewska A."/>
            <person name="Vo N."/>
            <person name="Wheeler J."/>
            <person name="Wu K."/>
            <person name="Yang J."/>
            <person name="Dickson M."/>
            <person name="Cheng J.-F."/>
            <person name="Eichler E.E."/>
            <person name="Olsen A."/>
            <person name="Pennacchio L.A."/>
            <person name="Rokhsar D.S."/>
            <person name="Richardson P."/>
            <person name="Lucas S.M."/>
            <person name="Myers R.M."/>
            <person name="Rubin E.M."/>
        </authorList>
    </citation>
    <scope>NUCLEOTIDE SEQUENCE [LARGE SCALE GENOMIC DNA]</scope>
</reference>
<reference key="4">
    <citation type="journal article" date="2004" name="Genome Res.">
        <title>The status, quality, and expansion of the NIH full-length cDNA project: the Mammalian Gene Collection (MGC).</title>
        <authorList>
            <consortium name="The MGC Project Team"/>
        </authorList>
    </citation>
    <scope>NUCLEOTIDE SEQUENCE [LARGE SCALE MRNA] (ISOFORMS A AND B)</scope>
    <source>
        <tissue>Lung</tissue>
    </source>
</reference>
<reference key="5">
    <citation type="journal article" date="2006" name="Proc. Natl. Acad. Sci. U.S.A.">
        <title>Human methionine synthase reductase is a molecular chaperone for human methionine synthase.</title>
        <authorList>
            <person name="Yamada K."/>
            <person name="Gravel R.A."/>
            <person name="Toraya T."/>
            <person name="Matthews R.G."/>
        </authorList>
    </citation>
    <scope>FUNCTION</scope>
    <scope>CATALYTIC ACTIVITY</scope>
    <scope>BIOPHYSICOCHEMICAL PROPERTIES</scope>
</reference>
<reference key="6">
    <citation type="journal article" date="2008" name="Mol. Genet. Metab.">
        <title>Restricted role for methionine synthase reductase defined by subcellular localization.</title>
        <authorList>
            <person name="Froese D.S."/>
            <person name="Wu X."/>
            <person name="Zhang J."/>
            <person name="Dumas R."/>
            <person name="Schoel W.M."/>
            <person name="Amrein M."/>
            <person name="Gravel R.A."/>
        </authorList>
    </citation>
    <scope>SUBCELLULAR LOCATION (ISOFORM A)</scope>
</reference>
<reference key="7">
    <citation type="journal article" date="2009" name="FEBS J.">
        <title>Cobalamin uptake and reactivation occurs through specific protein interactions in the methionine synthase-methionine synthase reductase complex.</title>
        <authorList>
            <person name="Wolthers K.R."/>
            <person name="Scrutton N.S."/>
        </authorList>
    </citation>
    <scope>FUNCTION</scope>
</reference>
<reference key="8">
    <citation type="journal article" date="2010" name="Sci. Signal.">
        <title>Quantitative phosphoproteomics reveals widespread full phosphorylation site occupancy during mitosis.</title>
        <authorList>
            <person name="Olsen J.V."/>
            <person name="Vermeulen M."/>
            <person name="Santamaria A."/>
            <person name="Kumar C."/>
            <person name="Miller M.L."/>
            <person name="Jensen L.J."/>
            <person name="Gnad F."/>
            <person name="Cox J."/>
            <person name="Jensen T.S."/>
            <person name="Nigg E.A."/>
            <person name="Brunak S."/>
            <person name="Mann M."/>
        </authorList>
    </citation>
    <scope>PHOSPHORYLATION [LARGE SCALE ANALYSIS] AT SER-171</scope>
    <scope>IDENTIFICATION BY MASS SPECTROMETRY [LARGE SCALE ANALYSIS]</scope>
    <source>
        <tissue>Cervix carcinoma</tissue>
    </source>
</reference>
<reference key="9">
    <citation type="journal article" date="2011" name="BMC Syst. Biol.">
        <title>Initial characterization of the human central proteome.</title>
        <authorList>
            <person name="Burkard T.R."/>
            <person name="Planyavsky M."/>
            <person name="Kaupe I."/>
            <person name="Breitwieser F.P."/>
            <person name="Buerckstuemmer T."/>
            <person name="Bennett K.L."/>
            <person name="Superti-Furga G."/>
            <person name="Colinge J."/>
        </authorList>
    </citation>
    <scope>IDENTIFICATION BY MASS SPECTROMETRY [LARGE SCALE ANALYSIS]</scope>
</reference>
<reference key="10">
    <citation type="journal article" date="2013" name="J. Proteome Res.">
        <title>Toward a comprehensive characterization of a human cancer cell phosphoproteome.</title>
        <authorList>
            <person name="Zhou H."/>
            <person name="Di Palma S."/>
            <person name="Preisinger C."/>
            <person name="Peng M."/>
            <person name="Polat A.N."/>
            <person name="Heck A.J."/>
            <person name="Mohammed S."/>
        </authorList>
    </citation>
    <scope>PHOSPHORYLATION [LARGE SCALE ANALYSIS] AT SER-171 AND SER-189</scope>
    <scope>VARIANT [LARGE SCALE ANALYSIS] LEU-175</scope>
    <scope>IDENTIFICATION BY MASS SPECTROMETRY [LARGE SCALE ANALYSIS]</scope>
    <source>
        <tissue>Erythroleukemia</tissue>
    </source>
</reference>
<reference key="11">
    <citation type="journal article" date="2014" name="J. Proteomics">
        <title>An enzyme assisted RP-RPLC approach for in-depth analysis of human liver phosphoproteome.</title>
        <authorList>
            <person name="Bian Y."/>
            <person name="Song C."/>
            <person name="Cheng K."/>
            <person name="Dong M."/>
            <person name="Wang F."/>
            <person name="Huang J."/>
            <person name="Sun D."/>
            <person name="Wang L."/>
            <person name="Ye M."/>
            <person name="Zou H."/>
        </authorList>
    </citation>
    <scope>PHOSPHORYLATION [LARGE SCALE ANALYSIS] AT SER-189</scope>
    <scope>IDENTIFICATION BY MASS SPECTROMETRY [LARGE SCALE ANALYSIS]</scope>
    <source>
        <tissue>Liver</tissue>
    </source>
</reference>
<reference key="12">
    <citation type="journal article" date="2017" name="Biochim. Biophys. Acta">
        <title>Methionine synthase and methionine synthase reductase interact with MMACHC and with MMADHC.</title>
        <authorList>
            <person name="Bassila C."/>
            <person name="Ghemrawi R."/>
            <person name="Flayac J."/>
            <person name="Froese D.S."/>
            <person name="Baumgartner M.R."/>
            <person name="Gueant J.L."/>
            <person name="Coelho D."/>
        </authorList>
    </citation>
    <scope>FUNCTION</scope>
    <scope>INTERACTION WITH MMACHC; MMADHC AND MTR</scope>
</reference>
<reference key="13">
    <citation type="journal article" date="2007" name="Biochemistry">
        <title>Mechanism of coenzyme binding to human methionine synthase reductase revealed through the crystal structure of the FNR-like module and isothermal titration calorimetry.</title>
        <authorList>
            <person name="Wolthers K.R."/>
            <person name="Lou X."/>
            <person name="Toogood H.S."/>
            <person name="Leys D."/>
            <person name="Scrutton N.S."/>
        </authorList>
    </citation>
    <scope>X-RAY CRYSTALLOGRAPHY (1.9 ANGSTROMS) OF 165-698 IN COMPLEX WITH FAD AND NADP</scope>
    <scope>COFACTOR</scope>
    <scope>BIOPHYSICOCHEMICAL PROPERTIES</scope>
    <scope>CATALYTIC ACTIVITY</scope>
    <scope>FUNCTION</scope>
</reference>
<reference key="14">
    <citation type="journal article" date="1999" name="Hum. Mol. Genet.">
        <title>Molecular basis for methionine synthase reductase deficiency in patients belonging to the cblE complementation group of disorders in folate/cobalamin metabolism.</title>
        <authorList>
            <person name="Wilson A."/>
            <person name="Leclerc D."/>
            <person name="Rosenblatt D.S."/>
            <person name="Gravel R.A."/>
        </authorList>
    </citation>
    <scope>VARIANTS HMAE VAL-54 DEL; MET-56; THR-129; ARG-405; ARG-487 AND ARG-554</scope>
    <scope>VARIANT VAL-333</scope>
</reference>
<reference key="15">
    <citation type="journal article" date="1999" name="Mol. Genet. Metab.">
        <title>A common variant in methionine synthase reductase combined with low cobalamin (vitamin B12) increases risk for spina bifida.</title>
        <authorList>
            <person name="Wilson A."/>
            <person name="Platt R."/>
            <person name="Wu Q."/>
            <person name="Leclerc D."/>
            <person name="Christensen B."/>
            <person name="Yang H."/>
            <person name="Gravel R.A."/>
            <person name="Rozen R."/>
        </authorList>
    </citation>
    <scope>INVOLVEMENT IN SUSCEPTIBILITY TO NTDFS</scope>
    <scope>VARIANT MET-22</scope>
</reference>
<reference key="16">
    <citation type="journal article" date="2002" name="Am. J. Hum. Genet.">
        <title>Maternal genetic effects, exerted by genes involved in homocysteine remethylation, influence the risk of spina bifida.</title>
        <authorList>
            <person name="Doolin M.-T."/>
            <person name="Barbaux S."/>
            <person name="McDonnell M."/>
            <person name="Hoess K."/>
            <person name="Whitehead A.S."/>
            <person name="Mitchell L.E."/>
        </authorList>
    </citation>
    <scope>INVOLVEMENT IN SUSCEPTIBILITY TO NTDFS</scope>
    <scope>VARIANT MET-22</scope>
</reference>
<reference key="17">
    <citation type="journal article" date="2005" name="Mol. Genet. Metab.">
        <title>Analysis of methionine synthase reductase polymorphisms for neural tube defects risk association.</title>
        <authorList>
            <person name="O'Leary V.B."/>
            <person name="Mills J.L."/>
            <person name="Pangilinan F."/>
            <person name="Kirke P.N."/>
            <person name="Cox C."/>
            <person name="Conley M."/>
            <person name="Weiler A."/>
            <person name="Peng K."/>
            <person name="Shane B."/>
            <person name="Scott J.M."/>
            <person name="Parle-McDermott A."/>
            <person name="Molloy A.M."/>
            <person name="Brody L.C."/>
        </authorList>
    </citation>
    <scope>VARIANTS MET-22; LEU-175 AND ARG-350</scope>
</reference>
<organism>
    <name type="scientific">Homo sapiens</name>
    <name type="common">Human</name>
    <dbReference type="NCBI Taxonomy" id="9606"/>
    <lineage>
        <taxon>Eukaryota</taxon>
        <taxon>Metazoa</taxon>
        <taxon>Chordata</taxon>
        <taxon>Craniata</taxon>
        <taxon>Vertebrata</taxon>
        <taxon>Euteleostomi</taxon>
        <taxon>Mammalia</taxon>
        <taxon>Eutheria</taxon>
        <taxon>Euarchontoglires</taxon>
        <taxon>Primates</taxon>
        <taxon>Haplorrhini</taxon>
        <taxon>Catarrhini</taxon>
        <taxon>Hominidae</taxon>
        <taxon>Homo</taxon>
    </lineage>
</organism>
<evidence type="ECO:0000250" key="1">
    <source>
        <dbReference type="UniProtKB" id="Q8C1A3"/>
    </source>
</evidence>
<evidence type="ECO:0000255" key="2">
    <source>
        <dbReference type="PROSITE-ProRule" id="PRU00088"/>
    </source>
</evidence>
<evidence type="ECO:0000255" key="3">
    <source>
        <dbReference type="PROSITE-ProRule" id="PRU00716"/>
    </source>
</evidence>
<evidence type="ECO:0000269" key="4">
    <source>
    </source>
</evidence>
<evidence type="ECO:0000269" key="5">
    <source>
    </source>
</evidence>
<evidence type="ECO:0000269" key="6">
    <source>
    </source>
</evidence>
<evidence type="ECO:0000269" key="7">
    <source>
    </source>
</evidence>
<evidence type="ECO:0000269" key="8">
    <source>
    </source>
</evidence>
<evidence type="ECO:0000269" key="9">
    <source>
    </source>
</evidence>
<evidence type="ECO:0000269" key="10">
    <source>
    </source>
</evidence>
<evidence type="ECO:0000269" key="11">
    <source>
    </source>
</evidence>
<evidence type="ECO:0000269" key="12">
    <source>
    </source>
</evidence>
<evidence type="ECO:0000269" key="13">
    <source>
    </source>
</evidence>
<evidence type="ECO:0000303" key="14">
    <source>
    </source>
</evidence>
<evidence type="ECO:0000303" key="15">
    <source>
    </source>
</evidence>
<evidence type="ECO:0000303" key="16">
    <source>
    </source>
</evidence>
<evidence type="ECO:0000303" key="17">
    <source>
    </source>
</evidence>
<evidence type="ECO:0000305" key="18"/>
<evidence type="ECO:0000305" key="19">
    <source>
    </source>
</evidence>
<evidence type="ECO:0000305" key="20">
    <source>
    </source>
</evidence>
<evidence type="ECO:0000305" key="21">
    <source>
    </source>
</evidence>
<evidence type="ECO:0000312" key="22">
    <source>
        <dbReference type="HGNC" id="HGNC:7473"/>
    </source>
</evidence>
<evidence type="ECO:0007744" key="23">
    <source>
    </source>
</evidence>
<evidence type="ECO:0007744" key="24">
    <source>
    </source>
</evidence>
<evidence type="ECO:0007744" key="25">
    <source>
    </source>
</evidence>
<evidence type="ECO:0007829" key="26">
    <source>
        <dbReference type="PDB" id="2QTL"/>
    </source>
</evidence>
<protein>
    <recommendedName>
        <fullName>Methionine synthase reductase</fullName>
        <shortName>MSR</shortName>
        <ecNumber evidence="10">1.16.1.8</ecNumber>
    </recommendedName>
    <alternativeName>
        <fullName evidence="16">Aquacobalamin reductase</fullName>
        <shortName evidence="16">AqCbl reductase</shortName>
    </alternativeName>
</protein>
<comment type="function">
    <text evidence="1 9 10 12 21">Key enzyme in methionine and folate homeostasis responsible for the reactivation of methionine synthase (MTR/MS) activity by catalyzing the reductive methylation of MTR-bound cob(II)alamin (PubMed:17892308). Cobalamin (vitamin B12) forms a complex with MTR to serve as an intermediary in methyl transfer reactions that cycles between MTR-bound methylcob(III)alamin and MTR bound-cob(I)alamin forms, and occasional oxidative escape of the cob(I)alamin intermediate during the catalytic cycle leads to the inactive cob(II)alamin species (Probable). The processing of cobalamin in the cytosol occurs in a multiprotein complex composed of at least MMACHC, MMADHC, MTRR and MTR which may contribute to shuttle safely and efficiently cobalamin towards MTR in order to produce methionine (PubMed:27771510). Also necessary for the utilization of methyl groups from the folate cycle, thereby affecting transgenerational epigenetic inheritance (By similarity). Also acts as a molecular chaperone for methionine synthase by stabilizing apoMTR and incorporating methylcob(III)alamin into apoMTR to form the holoenzyme (PubMed:16769880). Also serves as an aquacob(III)alamin reductase by reducing aquacob(III)alamin to cob(II)alamin; this reduction leads to stimulation of the conversion of apoMTR and aquacob(III)alamin to MTR holoenzyme (PubMed:16769880).</text>
</comment>
<comment type="catalytic activity">
    <reaction evidence="10">
        <text>2 methylcob(III)alamin-[methionine synthase] + 2 S-adenosyl-L-homocysteine + NADP(+) + H(+) = 2 cob(II)alamin-[methionine synthase] + 2 S-adenosyl-L-methionine + NADPH</text>
        <dbReference type="Rhea" id="RHEA:23908"/>
        <dbReference type="Rhea" id="RHEA-COMP:14714"/>
        <dbReference type="Rhea" id="RHEA-COMP:14715"/>
        <dbReference type="ChEBI" id="CHEBI:15378"/>
        <dbReference type="ChEBI" id="CHEBI:16304"/>
        <dbReference type="ChEBI" id="CHEBI:28115"/>
        <dbReference type="ChEBI" id="CHEBI:57783"/>
        <dbReference type="ChEBI" id="CHEBI:57856"/>
        <dbReference type="ChEBI" id="CHEBI:58349"/>
        <dbReference type="ChEBI" id="CHEBI:59789"/>
        <dbReference type="EC" id="1.16.1.8"/>
    </reaction>
    <physiologicalReaction direction="right-to-left" evidence="20">
        <dbReference type="Rhea" id="RHEA:23910"/>
    </physiologicalReaction>
</comment>
<comment type="catalytic activity">
    <reaction evidence="9">
        <text>2 cob(II)alamin + A + 2 H2O + 2 H(+) = 2 aquacob(III)alamin + AH2</text>
        <dbReference type="Rhea" id="RHEA:20752"/>
        <dbReference type="ChEBI" id="CHEBI:13193"/>
        <dbReference type="ChEBI" id="CHEBI:15377"/>
        <dbReference type="ChEBI" id="CHEBI:15378"/>
        <dbReference type="ChEBI" id="CHEBI:15852"/>
        <dbReference type="ChEBI" id="CHEBI:16304"/>
        <dbReference type="ChEBI" id="CHEBI:17499"/>
    </reaction>
    <physiologicalReaction direction="right-to-left" evidence="19">
        <dbReference type="Rhea" id="RHEA:20754"/>
    </physiologicalReaction>
</comment>
<comment type="cofactor">
    <cofactor evidence="10">
        <name>FAD</name>
        <dbReference type="ChEBI" id="CHEBI:57692"/>
    </cofactor>
</comment>
<comment type="cofactor">
    <cofactor evidence="10">
        <name>FMN</name>
        <dbReference type="ChEBI" id="CHEBI:58210"/>
    </cofactor>
</comment>
<comment type="biophysicochemical properties">
    <kinetics>
        <KM evidence="10">2.89 uM for NADPH</KM>
        <KM evidence="10">3540 uM for NADH</KM>
        <KM evidence="9">3.7 uM for aquacob(III)alamin (at 37 degrees Celsius, pH 7.2)</KM>
        <text evidence="9 10">kcat is 3.92 sec(-1) for the reduction of cytochrome c3 with NADPH (PubMed:17892308). kcat is 0.24 sec(-1) for the reduction of cytochrome c3 with NADH (PubMed:17892308). kcat is 220 min(-1) for aquacob(III)alamin reduction (PubMed:16769880).</text>
    </kinetics>
</comment>
<comment type="subunit">
    <text evidence="12">Forms a multiprotein complex with MMACHC, MMADHC and MTR.</text>
</comment>
<comment type="interaction">
    <interactant intactId="EBI-10319161">
        <id>Q9UBK8</id>
    </interactant>
    <interactant intactId="EBI-10172181">
        <id>Q53SE7</id>
        <label>FLJ13057</label>
    </interactant>
    <organismsDiffer>false</organismsDiffer>
    <experiments>3</experiments>
</comment>
<comment type="subcellular location">
    <molecule>Isoform B</molecule>
    <subcellularLocation>
        <location>Cytoplasm</location>
    </subcellularLocation>
</comment>
<comment type="subcellular location">
    <molecule>Isoform A</molecule>
    <subcellularLocation>
        <location evidence="11">Cytoplasm</location>
    </subcellularLocation>
</comment>
<comment type="alternative products">
    <event type="alternative splicing"/>
    <isoform>
        <id>Q9UBK8-2</id>
        <name>B</name>
        <sequence type="displayed"/>
    </isoform>
    <isoform>
        <id>Q9UBK8-1</id>
        <name>A</name>
        <sequence type="described" ref="VSP_060027"/>
    </isoform>
</comment>
<comment type="tissue specificity">
    <text>Found in all tissues tested, particularly abundant in skeletal muscle.</text>
</comment>
<comment type="disease" evidence="5 13">
    <disease id="DI-01970">
        <name>Homocystinuria-megaloblastic anemia, cblE type</name>
        <acronym>HMAE</acronym>
        <description>An autosomal recessive inborn error of metabolism resulting from defects in the cobalamin-dependent pathway that converts homocysteine to methionine. It causes delayed psychomotor development, megaloblastic anemia, homocystinuria, and hypomethioninemia. Cells from patients with HMAE fail to incorporate methyltetrahydrofolate into methionine in whole cells, but cell extracts show normal methionine synthase activity in the presence of a reducing agent.</description>
        <dbReference type="MIM" id="236270"/>
    </disease>
    <text>The disease is caused by variants affecting the gene represented in this entry.</text>
</comment>
<comment type="disease" evidence="4 7">
    <disease id="DI-01623">
        <name>Neural tube defects, folate-sensitive</name>
        <acronym>NTDFS</acronym>
        <description>The most common NTDs are open spina bifida (myelomeningocele) and anencephaly.</description>
        <dbReference type="MIM" id="601634"/>
    </disease>
    <text>Disease susceptibility is associated with variants affecting the gene represented in this entry.</text>
</comment>
<comment type="miscellaneous">
    <text evidence="18">It is debated whether the reduction of free aquacob(II)alamin occurs spontaneously or is enzyme catalyzed.</text>
</comment>
<comment type="online information" name="Protein Spotlight">
    <link uri="https://www.proteinspotlight.org/back_issues/166/"/>
    <text>The hidden things - Issue 166 of December 2014</text>
</comment>
<proteinExistence type="evidence at protein level"/>
<gene>
    <name evidence="22" type="primary">MTRR</name>
</gene>
<accession>Q9UBK8</accession>
<accession>O60471</accession>
<accession>Q32MA9</accession>
<accession>Q7Z4M8</accession>